<feature type="chain" id="PRO_1000055366" description="Large ribosomal subunit protein uL13">
    <location>
        <begin position="1"/>
        <end position="150"/>
    </location>
</feature>
<proteinExistence type="inferred from homology"/>
<protein>
    <recommendedName>
        <fullName evidence="1">Large ribosomal subunit protein uL13</fullName>
    </recommendedName>
    <alternativeName>
        <fullName evidence="2">50S ribosomal protein L13</fullName>
    </alternativeName>
</protein>
<keyword id="KW-0687">Ribonucleoprotein</keyword>
<keyword id="KW-0689">Ribosomal protein</keyword>
<reference key="1">
    <citation type="journal article" date="2005" name="Infect. Immun.">
        <title>Comparative genomic analysis of Chlamydia trachomatis oculotropic and genitotropic strains.</title>
        <authorList>
            <person name="Carlson J.H."/>
            <person name="Porcella S.F."/>
            <person name="McClarty G."/>
            <person name="Caldwell H.D."/>
        </authorList>
    </citation>
    <scope>NUCLEOTIDE SEQUENCE [LARGE SCALE GENOMIC DNA]</scope>
    <source>
        <strain>ATCC VR-571B / DSM 19440 / HAR-13</strain>
    </source>
</reference>
<sequence>MEKRKDTKTTLAKASDDRNKAWYVVNAEGKTLGRLSSEVAKILRGKHKVTFTPHVAMGDGVIVINAEKVRLTGAKRAQKVYHYYTGFISGMREVPFENMIARKPAYVIEHAVKGMLPKTKLGRRQMKSLRVLKGSSYAQYEAIKPIVLDA</sequence>
<organism>
    <name type="scientific">Chlamydia trachomatis serovar A (strain ATCC VR-571B / DSM 19440 / HAR-13)</name>
    <dbReference type="NCBI Taxonomy" id="315277"/>
    <lineage>
        <taxon>Bacteria</taxon>
        <taxon>Pseudomonadati</taxon>
        <taxon>Chlamydiota</taxon>
        <taxon>Chlamydiia</taxon>
        <taxon>Chlamydiales</taxon>
        <taxon>Chlamydiaceae</taxon>
        <taxon>Chlamydia/Chlamydophila group</taxon>
        <taxon>Chlamydia</taxon>
    </lineage>
</organism>
<gene>
    <name evidence="1" type="primary">rplM</name>
    <name type="ordered locus">CTA_0132</name>
</gene>
<evidence type="ECO:0000255" key="1">
    <source>
        <dbReference type="HAMAP-Rule" id="MF_01366"/>
    </source>
</evidence>
<evidence type="ECO:0000305" key="2"/>
<accession>Q3KMP4</accession>
<comment type="function">
    <text evidence="1">This protein is one of the early assembly proteins of the 50S ribosomal subunit, although it is not seen to bind rRNA by itself. It is important during the early stages of 50S assembly.</text>
</comment>
<comment type="subunit">
    <text evidence="1">Part of the 50S ribosomal subunit.</text>
</comment>
<comment type="similarity">
    <text evidence="1">Belongs to the universal ribosomal protein uL13 family.</text>
</comment>
<name>RL13_CHLTA</name>
<dbReference type="EMBL" id="CP000051">
    <property type="protein sequence ID" value="AAX50378.1"/>
    <property type="molecule type" value="Genomic_DNA"/>
</dbReference>
<dbReference type="RefSeq" id="WP_009871472.1">
    <property type="nucleotide sequence ID" value="NC_007429.1"/>
</dbReference>
<dbReference type="SMR" id="Q3KMP4"/>
<dbReference type="KEGG" id="cta:CTA_0132"/>
<dbReference type="HOGENOM" id="CLU_082184_2_2_0"/>
<dbReference type="Proteomes" id="UP000002532">
    <property type="component" value="Chromosome"/>
</dbReference>
<dbReference type="GO" id="GO:0022625">
    <property type="term" value="C:cytosolic large ribosomal subunit"/>
    <property type="evidence" value="ECO:0007669"/>
    <property type="project" value="TreeGrafter"/>
</dbReference>
<dbReference type="GO" id="GO:0003729">
    <property type="term" value="F:mRNA binding"/>
    <property type="evidence" value="ECO:0007669"/>
    <property type="project" value="TreeGrafter"/>
</dbReference>
<dbReference type="GO" id="GO:0003735">
    <property type="term" value="F:structural constituent of ribosome"/>
    <property type="evidence" value="ECO:0007669"/>
    <property type="project" value="InterPro"/>
</dbReference>
<dbReference type="GO" id="GO:0017148">
    <property type="term" value="P:negative regulation of translation"/>
    <property type="evidence" value="ECO:0007669"/>
    <property type="project" value="TreeGrafter"/>
</dbReference>
<dbReference type="GO" id="GO:0006412">
    <property type="term" value="P:translation"/>
    <property type="evidence" value="ECO:0007669"/>
    <property type="project" value="UniProtKB-UniRule"/>
</dbReference>
<dbReference type="CDD" id="cd00392">
    <property type="entry name" value="Ribosomal_L13"/>
    <property type="match status" value="1"/>
</dbReference>
<dbReference type="FunFam" id="3.90.1180.10:FF:000016">
    <property type="entry name" value="50S ribosomal protein L13"/>
    <property type="match status" value="1"/>
</dbReference>
<dbReference type="Gene3D" id="3.90.1180.10">
    <property type="entry name" value="Ribosomal protein L13"/>
    <property type="match status" value="1"/>
</dbReference>
<dbReference type="HAMAP" id="MF_01366">
    <property type="entry name" value="Ribosomal_uL13"/>
    <property type="match status" value="1"/>
</dbReference>
<dbReference type="InterPro" id="IPR005822">
    <property type="entry name" value="Ribosomal_uL13"/>
</dbReference>
<dbReference type="InterPro" id="IPR005823">
    <property type="entry name" value="Ribosomal_uL13_bac-type"/>
</dbReference>
<dbReference type="InterPro" id="IPR023563">
    <property type="entry name" value="Ribosomal_uL13_CS"/>
</dbReference>
<dbReference type="InterPro" id="IPR036899">
    <property type="entry name" value="Ribosomal_uL13_sf"/>
</dbReference>
<dbReference type="NCBIfam" id="TIGR01066">
    <property type="entry name" value="rplM_bact"/>
    <property type="match status" value="1"/>
</dbReference>
<dbReference type="PANTHER" id="PTHR11545:SF2">
    <property type="entry name" value="LARGE RIBOSOMAL SUBUNIT PROTEIN UL13M"/>
    <property type="match status" value="1"/>
</dbReference>
<dbReference type="PANTHER" id="PTHR11545">
    <property type="entry name" value="RIBOSOMAL PROTEIN L13"/>
    <property type="match status" value="1"/>
</dbReference>
<dbReference type="Pfam" id="PF00572">
    <property type="entry name" value="Ribosomal_L13"/>
    <property type="match status" value="1"/>
</dbReference>
<dbReference type="PIRSF" id="PIRSF002181">
    <property type="entry name" value="Ribosomal_L13"/>
    <property type="match status" value="1"/>
</dbReference>
<dbReference type="SUPFAM" id="SSF52161">
    <property type="entry name" value="Ribosomal protein L13"/>
    <property type="match status" value="1"/>
</dbReference>
<dbReference type="PROSITE" id="PS00783">
    <property type="entry name" value="RIBOSOMAL_L13"/>
    <property type="match status" value="1"/>
</dbReference>